<comment type="function">
    <text evidence="1">Activates KDO (a required 8-carbon sugar) for incorporation into bacterial lipopolysaccharide in Gram-negative bacteria.</text>
</comment>
<comment type="catalytic activity">
    <reaction evidence="1">
        <text>3-deoxy-alpha-D-manno-oct-2-ulosonate + CTP = CMP-3-deoxy-beta-D-manno-octulosonate + diphosphate</text>
        <dbReference type="Rhea" id="RHEA:23448"/>
        <dbReference type="ChEBI" id="CHEBI:33019"/>
        <dbReference type="ChEBI" id="CHEBI:37563"/>
        <dbReference type="ChEBI" id="CHEBI:85986"/>
        <dbReference type="ChEBI" id="CHEBI:85987"/>
        <dbReference type="EC" id="2.7.7.38"/>
    </reaction>
</comment>
<comment type="pathway">
    <text evidence="1">Nucleotide-sugar biosynthesis; CMP-3-deoxy-D-manno-octulosonate biosynthesis; CMP-3-deoxy-D-manno-octulosonate from 3-deoxy-D-manno-octulosonate and CTP: step 1/1.</text>
</comment>
<comment type="pathway">
    <text evidence="1">Bacterial outer membrane biogenesis; lipopolysaccharide biosynthesis.</text>
</comment>
<comment type="subcellular location">
    <subcellularLocation>
        <location evidence="1">Cytoplasm</location>
    </subcellularLocation>
</comment>
<comment type="similarity">
    <text evidence="1">Belongs to the KdsB family.</text>
</comment>
<accession>Q5N120</accession>
<sequence>MVRILAVIPARYASERLPGKVLLPIAGRPMLQWVYEATIASNVFDQVAIATEDPRVVEAAAAFGAEAILTSADLASGTDRVAEASLHFPDCKVIANVQGDQPFVTPGLLQALVSPYRAGELPEMTTVGGPYDPAQDADDPNTVKVVCDQRGNALYFSRSAIPYPRTVVHDLPVYHHFGLYAFRRDFLAQYRQLPPTPLERCESLEQLRVLEQGYRIRVVPCADKVIEVNTADDLERANAWASQR</sequence>
<proteinExistence type="inferred from homology"/>
<protein>
    <recommendedName>
        <fullName evidence="1">3-deoxy-manno-octulosonate cytidylyltransferase</fullName>
        <ecNumber evidence="1">2.7.7.38</ecNumber>
    </recommendedName>
    <alternativeName>
        <fullName evidence="1">CMP-2-keto-3-deoxyoctulosonic acid synthase</fullName>
        <shortName evidence="1">CKS</shortName>
        <shortName evidence="1">CMP-KDO synthase</shortName>
    </alternativeName>
</protein>
<name>KDSB_SYNP6</name>
<evidence type="ECO:0000255" key="1">
    <source>
        <dbReference type="HAMAP-Rule" id="MF_00057"/>
    </source>
</evidence>
<feature type="chain" id="PRO_1000190748" description="3-deoxy-manno-octulosonate cytidylyltransferase">
    <location>
        <begin position="1"/>
        <end position="244"/>
    </location>
</feature>
<organism>
    <name type="scientific">Synechococcus sp. (strain ATCC 27144 / PCC 6301 / SAUG 1402/1)</name>
    <name type="common">Anacystis nidulans</name>
    <dbReference type="NCBI Taxonomy" id="269084"/>
    <lineage>
        <taxon>Bacteria</taxon>
        <taxon>Bacillati</taxon>
        <taxon>Cyanobacteriota</taxon>
        <taxon>Cyanophyceae</taxon>
        <taxon>Synechococcales</taxon>
        <taxon>Synechococcaceae</taxon>
        <taxon>Synechococcus</taxon>
    </lineage>
</organism>
<dbReference type="EC" id="2.7.7.38" evidence="1"/>
<dbReference type="EMBL" id="AP008231">
    <property type="protein sequence ID" value="BAD80000.1"/>
    <property type="molecule type" value="Genomic_DNA"/>
</dbReference>
<dbReference type="RefSeq" id="WP_011244120.1">
    <property type="nucleotide sequence ID" value="NZ_CP085785.1"/>
</dbReference>
<dbReference type="SMR" id="Q5N120"/>
<dbReference type="GeneID" id="72431176"/>
<dbReference type="KEGG" id="syc:syc1810_d"/>
<dbReference type="eggNOG" id="COG1212">
    <property type="taxonomic scope" value="Bacteria"/>
</dbReference>
<dbReference type="UniPathway" id="UPA00030"/>
<dbReference type="UniPathway" id="UPA00358">
    <property type="reaction ID" value="UER00476"/>
</dbReference>
<dbReference type="Proteomes" id="UP000001175">
    <property type="component" value="Chromosome"/>
</dbReference>
<dbReference type="GO" id="GO:0005829">
    <property type="term" value="C:cytosol"/>
    <property type="evidence" value="ECO:0007669"/>
    <property type="project" value="TreeGrafter"/>
</dbReference>
<dbReference type="GO" id="GO:0008690">
    <property type="term" value="F:3-deoxy-manno-octulosonate cytidylyltransferase activity"/>
    <property type="evidence" value="ECO:0007669"/>
    <property type="project" value="UniProtKB-UniRule"/>
</dbReference>
<dbReference type="GO" id="GO:0033468">
    <property type="term" value="P:CMP-keto-3-deoxy-D-manno-octulosonic acid biosynthetic process"/>
    <property type="evidence" value="ECO:0007669"/>
    <property type="project" value="UniProtKB-UniRule"/>
</dbReference>
<dbReference type="GO" id="GO:0009103">
    <property type="term" value="P:lipopolysaccharide biosynthetic process"/>
    <property type="evidence" value="ECO:0007669"/>
    <property type="project" value="UniProtKB-UniRule"/>
</dbReference>
<dbReference type="CDD" id="cd02517">
    <property type="entry name" value="CMP-KDO-Synthetase"/>
    <property type="match status" value="1"/>
</dbReference>
<dbReference type="Gene3D" id="3.90.550.10">
    <property type="entry name" value="Spore Coat Polysaccharide Biosynthesis Protein SpsA, Chain A"/>
    <property type="match status" value="1"/>
</dbReference>
<dbReference type="HAMAP" id="MF_00057">
    <property type="entry name" value="KdsB"/>
    <property type="match status" value="1"/>
</dbReference>
<dbReference type="InterPro" id="IPR003329">
    <property type="entry name" value="Cytidylyl_trans"/>
</dbReference>
<dbReference type="InterPro" id="IPR004528">
    <property type="entry name" value="KdsB"/>
</dbReference>
<dbReference type="InterPro" id="IPR029044">
    <property type="entry name" value="Nucleotide-diphossugar_trans"/>
</dbReference>
<dbReference type="NCBIfam" id="TIGR00466">
    <property type="entry name" value="kdsB"/>
    <property type="match status" value="1"/>
</dbReference>
<dbReference type="NCBIfam" id="NF003950">
    <property type="entry name" value="PRK05450.1-3"/>
    <property type="match status" value="1"/>
</dbReference>
<dbReference type="NCBIfam" id="NF003952">
    <property type="entry name" value="PRK05450.1-5"/>
    <property type="match status" value="1"/>
</dbReference>
<dbReference type="NCBIfam" id="NF009905">
    <property type="entry name" value="PRK13368.1"/>
    <property type="match status" value="1"/>
</dbReference>
<dbReference type="PANTHER" id="PTHR42866">
    <property type="entry name" value="3-DEOXY-MANNO-OCTULOSONATE CYTIDYLYLTRANSFERASE"/>
    <property type="match status" value="1"/>
</dbReference>
<dbReference type="PANTHER" id="PTHR42866:SF2">
    <property type="entry name" value="3-DEOXY-MANNO-OCTULOSONATE CYTIDYLYLTRANSFERASE, MITOCHONDRIAL"/>
    <property type="match status" value="1"/>
</dbReference>
<dbReference type="Pfam" id="PF02348">
    <property type="entry name" value="CTP_transf_3"/>
    <property type="match status" value="1"/>
</dbReference>
<dbReference type="SUPFAM" id="SSF53448">
    <property type="entry name" value="Nucleotide-diphospho-sugar transferases"/>
    <property type="match status" value="1"/>
</dbReference>
<reference key="1">
    <citation type="journal article" date="2007" name="Photosyn. Res.">
        <title>Complete nucleotide sequence of the freshwater unicellular cyanobacterium Synechococcus elongatus PCC 6301 chromosome: gene content and organization.</title>
        <authorList>
            <person name="Sugita C."/>
            <person name="Ogata K."/>
            <person name="Shikata M."/>
            <person name="Jikuya H."/>
            <person name="Takano J."/>
            <person name="Furumichi M."/>
            <person name="Kanehisa M."/>
            <person name="Omata T."/>
            <person name="Sugiura M."/>
            <person name="Sugita M."/>
        </authorList>
    </citation>
    <scope>NUCLEOTIDE SEQUENCE [LARGE SCALE GENOMIC DNA]</scope>
    <source>
        <strain>ATCC 27144 / PCC 6301 / SAUG 1402/1</strain>
    </source>
</reference>
<gene>
    <name evidence="1" type="primary">kdsB</name>
    <name type="ordered locus">syc1810_d</name>
</gene>
<keyword id="KW-0963">Cytoplasm</keyword>
<keyword id="KW-0448">Lipopolysaccharide biosynthesis</keyword>
<keyword id="KW-0548">Nucleotidyltransferase</keyword>
<keyword id="KW-0808">Transferase</keyword>